<accession>P41811</accession>
<accession>D6VU12</accession>
<reference key="1">
    <citation type="journal article" date="1994" name="J. Biol. Chem.">
        <title>Yeast beta- and beta'-coat proteins (COP). Two coatomer subunits essential for endoplasmic reticulum-to-Golgi protein traffic.</title>
        <authorList>
            <person name="Duden R."/>
            <person name="Hosobuchi M."/>
            <person name="Hamamoto S."/>
            <person name="Winey M."/>
            <person name="Byers B."/>
            <person name="Schekman R."/>
        </authorList>
    </citation>
    <scope>NUCLEOTIDE SEQUENCE [GENOMIC DNA]</scope>
    <scope>PROTEIN SEQUENCE OF 1-11</scope>
    <source>
        <strain>RSY255</strain>
    </source>
</reference>
<reference key="2">
    <citation type="journal article" date="1996" name="Yeast">
        <title>Sequence analysis of a 14.6 kb DNA fragment of Saccharomyces cerevisiae chromosome VII reveals SEC27, SSM1b, a putative S-adenosylmethionine-dependent enzyme and six new open reading frames.</title>
        <authorList>
            <person name="Escribano V."/>
            <person name="Eraso P."/>
            <person name="Portillo F."/>
            <person name="Mazon M.J."/>
        </authorList>
    </citation>
    <scope>NUCLEOTIDE SEQUENCE [GENOMIC DNA]</scope>
    <source>
        <strain>ATCC 96604 / S288c / FY1679</strain>
    </source>
</reference>
<reference key="3">
    <citation type="journal article" date="1997" name="Nature">
        <title>The nucleotide sequence of Saccharomyces cerevisiae chromosome VII.</title>
        <authorList>
            <person name="Tettelin H."/>
            <person name="Agostoni-Carbone M.L."/>
            <person name="Albermann K."/>
            <person name="Albers M."/>
            <person name="Arroyo J."/>
            <person name="Backes U."/>
            <person name="Barreiros T."/>
            <person name="Bertani I."/>
            <person name="Bjourson A.J."/>
            <person name="Brueckner M."/>
            <person name="Bruschi C.V."/>
            <person name="Carignani G."/>
            <person name="Castagnoli L."/>
            <person name="Cerdan E."/>
            <person name="Clemente M.L."/>
            <person name="Coblenz A."/>
            <person name="Coglievina M."/>
            <person name="Coissac E."/>
            <person name="Defoor E."/>
            <person name="Del Bino S."/>
            <person name="Delius H."/>
            <person name="Delneri D."/>
            <person name="de Wergifosse P."/>
            <person name="Dujon B."/>
            <person name="Durand P."/>
            <person name="Entian K.-D."/>
            <person name="Eraso P."/>
            <person name="Escribano V."/>
            <person name="Fabiani L."/>
            <person name="Fartmann B."/>
            <person name="Feroli F."/>
            <person name="Feuermann M."/>
            <person name="Frontali L."/>
            <person name="Garcia-Gonzalez M."/>
            <person name="Garcia-Saez M.I."/>
            <person name="Goffeau A."/>
            <person name="Guerreiro P."/>
            <person name="Hani J."/>
            <person name="Hansen M."/>
            <person name="Hebling U."/>
            <person name="Hernandez K."/>
            <person name="Heumann K."/>
            <person name="Hilger F."/>
            <person name="Hofmann B."/>
            <person name="Indge K.J."/>
            <person name="James C.M."/>
            <person name="Klima R."/>
            <person name="Koetter P."/>
            <person name="Kramer B."/>
            <person name="Kramer W."/>
            <person name="Lauquin G."/>
            <person name="Leuther H."/>
            <person name="Louis E.J."/>
            <person name="Maillier E."/>
            <person name="Marconi A."/>
            <person name="Martegani E."/>
            <person name="Mazon M.J."/>
            <person name="Mazzoni C."/>
            <person name="McReynolds A.D.K."/>
            <person name="Melchioretto P."/>
            <person name="Mewes H.-W."/>
            <person name="Minenkova O."/>
            <person name="Mueller-Auer S."/>
            <person name="Nawrocki A."/>
            <person name="Netter P."/>
            <person name="Neu R."/>
            <person name="Nombela C."/>
            <person name="Oliver S.G."/>
            <person name="Panzeri L."/>
            <person name="Paoluzi S."/>
            <person name="Plevani P."/>
            <person name="Portetelle D."/>
            <person name="Portillo F."/>
            <person name="Potier S."/>
            <person name="Purnelle B."/>
            <person name="Rieger M."/>
            <person name="Riles L."/>
            <person name="Rinaldi T."/>
            <person name="Robben J."/>
            <person name="Rodrigues-Pousada C."/>
            <person name="Rodriguez-Belmonte E."/>
            <person name="Rodriguez-Torres A.M."/>
            <person name="Rose M."/>
            <person name="Ruzzi M."/>
            <person name="Saliola M."/>
            <person name="Sanchez-Perez M."/>
            <person name="Schaefer B."/>
            <person name="Schaefer M."/>
            <person name="Scharfe M."/>
            <person name="Schmidheini T."/>
            <person name="Schreer A."/>
            <person name="Skala J."/>
            <person name="Souciet J.-L."/>
            <person name="Steensma H.Y."/>
            <person name="Talla E."/>
            <person name="Thierry A."/>
            <person name="Vandenbol M."/>
            <person name="van der Aart Q.J.M."/>
            <person name="Van Dyck L."/>
            <person name="Vanoni M."/>
            <person name="Verhasselt P."/>
            <person name="Voet M."/>
            <person name="Volckaert G."/>
            <person name="Wambutt R."/>
            <person name="Watson M.D."/>
            <person name="Weber N."/>
            <person name="Wedler E."/>
            <person name="Wedler H."/>
            <person name="Wipfli P."/>
            <person name="Wolf K."/>
            <person name="Wright L.F."/>
            <person name="Zaccaria P."/>
            <person name="Zimmermann M."/>
            <person name="Zollner A."/>
            <person name="Kleine K."/>
        </authorList>
    </citation>
    <scope>NUCLEOTIDE SEQUENCE [LARGE SCALE GENOMIC DNA]</scope>
    <source>
        <strain>ATCC 204508 / S288c</strain>
    </source>
</reference>
<reference key="4">
    <citation type="journal article" date="2014" name="G3 (Bethesda)">
        <title>The reference genome sequence of Saccharomyces cerevisiae: Then and now.</title>
        <authorList>
            <person name="Engel S.R."/>
            <person name="Dietrich F.S."/>
            <person name="Fisk D.G."/>
            <person name="Binkley G."/>
            <person name="Balakrishnan R."/>
            <person name="Costanzo M.C."/>
            <person name="Dwight S.S."/>
            <person name="Hitz B.C."/>
            <person name="Karra K."/>
            <person name="Nash R.S."/>
            <person name="Weng S."/>
            <person name="Wong E.D."/>
            <person name="Lloyd P."/>
            <person name="Skrzypek M.S."/>
            <person name="Miyasato S.R."/>
            <person name="Simison M."/>
            <person name="Cherry J.M."/>
        </authorList>
    </citation>
    <scope>GENOME REANNOTATION</scope>
    <source>
        <strain>ATCC 204508 / S288c</strain>
    </source>
</reference>
<reference key="5">
    <citation type="journal article" date="1993" name="FEBS Lett.">
        <title>Yeast coatomer contains a subunit homologous to mammalian beta'-COP.</title>
        <authorList>
            <person name="Harter C."/>
            <person name="Draken E."/>
            <person name="Lottspeich F."/>
            <person name="Wieland F.T."/>
        </authorList>
    </citation>
    <scope>PROTEIN SEQUENCE OF 1-27</scope>
    <source>
        <strain>ATCC 208279 / BJ926</strain>
    </source>
</reference>
<reference key="6">
    <citation type="journal article" date="2003" name="Nature">
        <title>Global analysis of protein localization in budding yeast.</title>
        <authorList>
            <person name="Huh W.-K."/>
            <person name="Falvo J.V."/>
            <person name="Gerke L.C."/>
            <person name="Carroll A.S."/>
            <person name="Howson R.W."/>
            <person name="Weissman J.S."/>
            <person name="O'Shea E.K."/>
        </authorList>
    </citation>
    <scope>SUBCELLULAR LOCATION [LARGE SCALE ANALYSIS]</scope>
</reference>
<reference key="7">
    <citation type="journal article" date="2003" name="Nature">
        <title>Global analysis of protein expression in yeast.</title>
        <authorList>
            <person name="Ghaemmaghami S."/>
            <person name="Huh W.-K."/>
            <person name="Bower K."/>
            <person name="Howson R.W."/>
            <person name="Belle A."/>
            <person name="Dephoure N."/>
            <person name="O'Shea E.K."/>
            <person name="Weissman J.S."/>
        </authorList>
    </citation>
    <scope>LEVEL OF PROTEIN EXPRESSION [LARGE SCALE ANALYSIS]</scope>
</reference>
<reference key="8">
    <citation type="journal article" date="2007" name="Mol. Cell. Biol.">
        <title>Involvement of specific COPI subunits in protein sorting from the late endosome to the vacuole in yeast.</title>
        <authorList>
            <person name="Gabriely G."/>
            <person name="Kama R."/>
            <person name="Gerst J.E."/>
        </authorList>
    </citation>
    <scope>FUNCTION</scope>
    <scope>SUBCELLULAR LOCATION</scope>
    <scope>INTERACTION WITH VPS27</scope>
</reference>
<reference key="9">
    <citation type="journal article" date="2008" name="Mol. Cell. Proteomics">
        <title>A multidimensional chromatography technology for in-depth phosphoproteome analysis.</title>
        <authorList>
            <person name="Albuquerque C.P."/>
            <person name="Smolka M.B."/>
            <person name="Payne S.H."/>
            <person name="Bafna V."/>
            <person name="Eng J."/>
            <person name="Zhou H."/>
        </authorList>
    </citation>
    <scope>IDENTIFICATION BY MASS SPECTROMETRY [LARGE SCALE ANALYSIS]</scope>
</reference>
<reference key="10">
    <citation type="journal article" date="2009" name="Science">
        <title>Global analysis of Cdk1 substrate phosphorylation sites provides insights into evolution.</title>
        <authorList>
            <person name="Holt L.J."/>
            <person name="Tuch B.B."/>
            <person name="Villen J."/>
            <person name="Johnson A.D."/>
            <person name="Gygi S.P."/>
            <person name="Morgan D.O."/>
        </authorList>
    </citation>
    <scope>PHOSPHORYLATION [LARGE SCALE ANALYSIS] AT SER-326</scope>
    <scope>IDENTIFICATION BY MASS SPECTROMETRY [LARGE SCALE ANALYSIS]</scope>
</reference>
<reference key="11">
    <citation type="journal article" date="2012" name="Proc. Natl. Acad. Sci. U.S.A.">
        <title>N-terminal acetylome analyses and functional insights of the N-terminal acetyltransferase NatB.</title>
        <authorList>
            <person name="Van Damme P."/>
            <person name="Lasa M."/>
            <person name="Polevoda B."/>
            <person name="Gazquez C."/>
            <person name="Elosegui-Artola A."/>
            <person name="Kim D.S."/>
            <person name="De Juan-Pardo E."/>
            <person name="Demeyer K."/>
            <person name="Hole K."/>
            <person name="Larrea E."/>
            <person name="Timmerman E."/>
            <person name="Prieto J."/>
            <person name="Arnesen T."/>
            <person name="Sherman F."/>
            <person name="Gevaert K."/>
            <person name="Aldabe R."/>
        </authorList>
    </citation>
    <scope>IDENTIFICATION BY MASS SPECTROMETRY [LARGE SCALE ANALYSIS]</scope>
</reference>
<evidence type="ECO:0000250" key="1"/>
<evidence type="ECO:0000256" key="2">
    <source>
        <dbReference type="SAM" id="MobiDB-lite"/>
    </source>
</evidence>
<evidence type="ECO:0000269" key="3">
    <source>
    </source>
</evidence>
<evidence type="ECO:0000269" key="4">
    <source>
    </source>
</evidence>
<evidence type="ECO:0000305" key="5"/>
<evidence type="ECO:0007744" key="6">
    <source>
    </source>
</evidence>
<evidence type="ECO:0007829" key="7">
    <source>
        <dbReference type="PDB" id="2YNP"/>
    </source>
</evidence>
<evidence type="ECO:0007829" key="8">
    <source>
        <dbReference type="PDB" id="8EWX"/>
    </source>
</evidence>
<keyword id="KW-0002">3D-structure</keyword>
<keyword id="KW-0963">Cytoplasm</keyword>
<keyword id="KW-0968">Cytoplasmic vesicle</keyword>
<keyword id="KW-0903">Direct protein sequencing</keyword>
<keyword id="KW-0931">ER-Golgi transport</keyword>
<keyword id="KW-0333">Golgi apparatus</keyword>
<keyword id="KW-0472">Membrane</keyword>
<keyword id="KW-0597">Phosphoprotein</keyword>
<keyword id="KW-0653">Protein transport</keyword>
<keyword id="KW-1185">Reference proteome</keyword>
<keyword id="KW-0677">Repeat</keyword>
<keyword id="KW-0813">Transport</keyword>
<keyword id="KW-0853">WD repeat</keyword>
<dbReference type="EMBL" id="U11237">
    <property type="protein sequence ID" value="AAA61711.1"/>
    <property type="molecule type" value="Genomic_DNA"/>
</dbReference>
<dbReference type="EMBL" id="X92670">
    <property type="protein sequence ID" value="CAA63359.1"/>
    <property type="molecule type" value="Genomic_DNA"/>
</dbReference>
<dbReference type="EMBL" id="Z72659">
    <property type="protein sequence ID" value="CAA96848.1"/>
    <property type="molecule type" value="Genomic_DNA"/>
</dbReference>
<dbReference type="EMBL" id="BK006941">
    <property type="protein sequence ID" value="DAA07973.1"/>
    <property type="molecule type" value="Genomic_DNA"/>
</dbReference>
<dbReference type="PIR" id="B55123">
    <property type="entry name" value="B55123"/>
</dbReference>
<dbReference type="RefSeq" id="NP_011378.1">
    <property type="nucleotide sequence ID" value="NM_001181002.1"/>
</dbReference>
<dbReference type="PDB" id="2YNN">
    <property type="method" value="X-ray"/>
    <property type="resolution" value="1.78 A"/>
    <property type="chains" value="A=1-304"/>
</dbReference>
<dbReference type="PDB" id="2YNO">
    <property type="method" value="X-ray"/>
    <property type="resolution" value="1.80 A"/>
    <property type="chains" value="A/B=1-304"/>
</dbReference>
<dbReference type="PDB" id="2YNP">
    <property type="method" value="X-ray"/>
    <property type="resolution" value="2.96 A"/>
    <property type="chains" value="A=1-604"/>
</dbReference>
<dbReference type="PDB" id="4J73">
    <property type="method" value="X-ray"/>
    <property type="resolution" value="1.44 A"/>
    <property type="chains" value="A=1-301"/>
</dbReference>
<dbReference type="PDB" id="4J77">
    <property type="method" value="X-ray"/>
    <property type="resolution" value="1.76 A"/>
    <property type="chains" value="A/B=1-301"/>
</dbReference>
<dbReference type="PDB" id="4J78">
    <property type="method" value="X-ray"/>
    <property type="resolution" value="1.48 A"/>
    <property type="chains" value="A=1-301"/>
</dbReference>
<dbReference type="PDB" id="4J79">
    <property type="method" value="X-ray"/>
    <property type="resolution" value="1.56 A"/>
    <property type="chains" value="A=1-300"/>
</dbReference>
<dbReference type="PDB" id="4J81">
    <property type="method" value="X-ray"/>
    <property type="resolution" value="1.74 A"/>
    <property type="chains" value="A/B=1-301"/>
</dbReference>
<dbReference type="PDB" id="4J82">
    <property type="method" value="X-ray"/>
    <property type="resolution" value="1.46 A"/>
    <property type="chains" value="A/B=1-301"/>
</dbReference>
<dbReference type="PDB" id="4J84">
    <property type="method" value="X-ray"/>
    <property type="resolution" value="1.47 A"/>
    <property type="chains" value="A/B=1-301"/>
</dbReference>
<dbReference type="PDB" id="4J86">
    <property type="method" value="X-ray"/>
    <property type="resolution" value="1.48 A"/>
    <property type="chains" value="A/B=1-301"/>
</dbReference>
<dbReference type="PDB" id="8ENS">
    <property type="method" value="X-ray"/>
    <property type="resolution" value="1.45 A"/>
    <property type="chains" value="A=1-301"/>
</dbReference>
<dbReference type="PDB" id="8ENW">
    <property type="method" value="X-ray"/>
    <property type="resolution" value="1.45 A"/>
    <property type="chains" value="A/B=1-301"/>
</dbReference>
<dbReference type="PDB" id="8ENX">
    <property type="method" value="X-ray"/>
    <property type="resolution" value="1.80 A"/>
    <property type="chains" value="A/B=1-301"/>
</dbReference>
<dbReference type="PDB" id="8EWX">
    <property type="method" value="X-ray"/>
    <property type="resolution" value="1.24 A"/>
    <property type="chains" value="A/B=1-301"/>
</dbReference>
<dbReference type="PDB" id="8F0E">
    <property type="method" value="X-ray"/>
    <property type="resolution" value="1.31 A"/>
    <property type="chains" value="A/B/C/D=1-301"/>
</dbReference>
<dbReference type="PDB" id="8HQT">
    <property type="method" value="X-ray"/>
    <property type="resolution" value="1.80 A"/>
    <property type="chains" value="A=1-301"/>
</dbReference>
<dbReference type="PDB" id="8HQV">
    <property type="method" value="X-ray"/>
    <property type="resolution" value="1.40 A"/>
    <property type="chains" value="A=1-301"/>
</dbReference>
<dbReference type="PDB" id="8HQW">
    <property type="method" value="X-ray"/>
    <property type="resolution" value="1.41 A"/>
    <property type="chains" value="A=1-301"/>
</dbReference>
<dbReference type="PDB" id="8HQX">
    <property type="method" value="X-ray"/>
    <property type="resolution" value="1.54 A"/>
    <property type="chains" value="A=1-301"/>
</dbReference>
<dbReference type="PDB" id="8R8B">
    <property type="method" value="X-ray"/>
    <property type="resolution" value="1.81 A"/>
    <property type="chains" value="AAA/BBB/CCC/DDD/EEE/FFF/GGG/HHH/III/JJJ/KKK/LLL/MMM/NNN/OOO/PPP/QQQ/RRR/SSS/TTT/UUU/VVV/WWW/XXX=1-304"/>
</dbReference>
<dbReference type="PDB" id="8SZX">
    <property type="method" value="X-ray"/>
    <property type="resolution" value="2.00 A"/>
    <property type="chains" value="A/B=1-301"/>
</dbReference>
<dbReference type="PDBsum" id="2YNN"/>
<dbReference type="PDBsum" id="2YNO"/>
<dbReference type="PDBsum" id="2YNP"/>
<dbReference type="PDBsum" id="4J73"/>
<dbReference type="PDBsum" id="4J77"/>
<dbReference type="PDBsum" id="4J78"/>
<dbReference type="PDBsum" id="4J79"/>
<dbReference type="PDBsum" id="4J81"/>
<dbReference type="PDBsum" id="4J82"/>
<dbReference type="PDBsum" id="4J84"/>
<dbReference type="PDBsum" id="4J86"/>
<dbReference type="PDBsum" id="8ENS"/>
<dbReference type="PDBsum" id="8ENW"/>
<dbReference type="PDBsum" id="8ENX"/>
<dbReference type="PDBsum" id="8EWX"/>
<dbReference type="PDBsum" id="8F0E"/>
<dbReference type="PDBsum" id="8HQT"/>
<dbReference type="PDBsum" id="8HQV"/>
<dbReference type="PDBsum" id="8HQW"/>
<dbReference type="PDBsum" id="8HQX"/>
<dbReference type="PDBsum" id="8R8B"/>
<dbReference type="PDBsum" id="8SZX"/>
<dbReference type="SMR" id="P41811"/>
<dbReference type="BioGRID" id="33115">
    <property type="interactions" value="714"/>
</dbReference>
<dbReference type="ComplexPortal" id="CPX-1652">
    <property type="entry name" value="COPI vesicle coat complex"/>
</dbReference>
<dbReference type="DIP" id="DIP-6468N"/>
<dbReference type="FunCoup" id="P41811">
    <property type="interactions" value="1610"/>
</dbReference>
<dbReference type="IntAct" id="P41811">
    <property type="interactions" value="174"/>
</dbReference>
<dbReference type="MINT" id="P41811"/>
<dbReference type="STRING" id="4932.YGL137W"/>
<dbReference type="TCDB" id="3.A.31.1.1">
    <property type="family name" value="the endosomal sorting complexes required for transport iii (escrt-iii) family"/>
</dbReference>
<dbReference type="iPTMnet" id="P41811"/>
<dbReference type="PaxDb" id="4932-YGL137W"/>
<dbReference type="PeptideAtlas" id="P41811"/>
<dbReference type="EnsemblFungi" id="YGL137W_mRNA">
    <property type="protein sequence ID" value="YGL137W"/>
    <property type="gene ID" value="YGL137W"/>
</dbReference>
<dbReference type="GeneID" id="852740"/>
<dbReference type="KEGG" id="sce:YGL137W"/>
<dbReference type="AGR" id="SGD:S000003105"/>
<dbReference type="SGD" id="S000003105">
    <property type="gene designation" value="SEC27"/>
</dbReference>
<dbReference type="VEuPathDB" id="FungiDB:YGL137W"/>
<dbReference type="eggNOG" id="KOG0276">
    <property type="taxonomic scope" value="Eukaryota"/>
</dbReference>
<dbReference type="GeneTree" id="ENSGT00900000141083"/>
<dbReference type="HOGENOM" id="CLU_005507_1_0_1"/>
<dbReference type="InParanoid" id="P41811"/>
<dbReference type="OMA" id="YVDYYPQ"/>
<dbReference type="OrthoDB" id="10261470at2759"/>
<dbReference type="BioCyc" id="YEAST:G3O-30632-MONOMER"/>
<dbReference type="Reactome" id="R-SCE-6807878">
    <property type="pathway name" value="COPI-mediated anterograde transport"/>
</dbReference>
<dbReference type="Reactome" id="R-SCE-6811434">
    <property type="pathway name" value="COPI-dependent Golgi-to-ER retrograde traffic"/>
</dbReference>
<dbReference type="BioGRID-ORCS" id="852740">
    <property type="hits" value="3 hits in 10 CRISPR screens"/>
</dbReference>
<dbReference type="CD-CODE" id="E03F929F">
    <property type="entry name" value="Stress granule"/>
</dbReference>
<dbReference type="EvolutionaryTrace" id="P41811"/>
<dbReference type="PRO" id="PR:P41811"/>
<dbReference type="Proteomes" id="UP000002311">
    <property type="component" value="Chromosome VII"/>
</dbReference>
<dbReference type="RNAct" id="P41811">
    <property type="molecule type" value="protein"/>
</dbReference>
<dbReference type="GO" id="GO:0030126">
    <property type="term" value="C:COPI vesicle coat"/>
    <property type="evidence" value="ECO:0000314"/>
    <property type="project" value="SGD"/>
</dbReference>
<dbReference type="GO" id="GO:0000139">
    <property type="term" value="C:Golgi membrane"/>
    <property type="evidence" value="ECO:0007669"/>
    <property type="project" value="UniProtKB-SubCell"/>
</dbReference>
<dbReference type="GO" id="GO:0005198">
    <property type="term" value="F:structural molecule activity"/>
    <property type="evidence" value="ECO:0007669"/>
    <property type="project" value="InterPro"/>
</dbReference>
<dbReference type="GO" id="GO:0043130">
    <property type="term" value="F:ubiquitin binding"/>
    <property type="evidence" value="ECO:0000314"/>
    <property type="project" value="SGD"/>
</dbReference>
<dbReference type="GO" id="GO:0006888">
    <property type="term" value="P:endoplasmic reticulum to Golgi vesicle-mediated transport"/>
    <property type="evidence" value="ECO:0000315"/>
    <property type="project" value="SGD"/>
</dbReference>
<dbReference type="GO" id="GO:0006891">
    <property type="term" value="P:intra-Golgi vesicle-mediated transport"/>
    <property type="evidence" value="ECO:0000318"/>
    <property type="project" value="GO_Central"/>
</dbReference>
<dbReference type="GO" id="GO:0008298">
    <property type="term" value="P:intracellular mRNA localization"/>
    <property type="evidence" value="ECO:0000315"/>
    <property type="project" value="SGD"/>
</dbReference>
<dbReference type="GO" id="GO:0006886">
    <property type="term" value="P:intracellular protein transport"/>
    <property type="evidence" value="ECO:0000318"/>
    <property type="project" value="GO_Central"/>
</dbReference>
<dbReference type="GO" id="GO:0032511">
    <property type="term" value="P:late endosome to vacuole transport via multivesicular body sorting pathway"/>
    <property type="evidence" value="ECO:0000315"/>
    <property type="project" value="SGD"/>
</dbReference>
<dbReference type="GO" id="GO:0006890">
    <property type="term" value="P:retrograde vesicle-mediated transport, Golgi to endoplasmic reticulum"/>
    <property type="evidence" value="ECO:0000315"/>
    <property type="project" value="SGD"/>
</dbReference>
<dbReference type="CDD" id="cd22938">
    <property type="entry name" value="Coatomer_WDAD"/>
    <property type="match status" value="1"/>
</dbReference>
<dbReference type="CDD" id="cd00200">
    <property type="entry name" value="WD40"/>
    <property type="match status" value="1"/>
</dbReference>
<dbReference type="FunFam" id="2.130.10.10:FF:000016">
    <property type="entry name" value="Coatomer alpha subunit, putative"/>
    <property type="match status" value="1"/>
</dbReference>
<dbReference type="FunFam" id="1.25.40.470:FF:000001">
    <property type="entry name" value="Coatomer subunit beta"/>
    <property type="match status" value="1"/>
</dbReference>
<dbReference type="Gene3D" id="1.25.40.470">
    <property type="match status" value="1"/>
</dbReference>
<dbReference type="Gene3D" id="2.130.10.10">
    <property type="entry name" value="YVTN repeat-like/Quinoprotein amine dehydrogenase"/>
    <property type="match status" value="1"/>
</dbReference>
<dbReference type="InterPro" id="IPR006692">
    <property type="entry name" value="Beta-prop_COPA/B_2nd"/>
</dbReference>
<dbReference type="InterPro" id="IPR050844">
    <property type="entry name" value="Coatomer_complex_subunit"/>
</dbReference>
<dbReference type="InterPro" id="IPR016453">
    <property type="entry name" value="COPB2"/>
</dbReference>
<dbReference type="InterPro" id="IPR020472">
    <property type="entry name" value="G-protein_beta_WD-40_rep"/>
</dbReference>
<dbReference type="InterPro" id="IPR056176">
    <property type="entry name" value="TPR_COPA_B"/>
</dbReference>
<dbReference type="InterPro" id="IPR015943">
    <property type="entry name" value="WD40/YVTN_repeat-like_dom_sf"/>
</dbReference>
<dbReference type="InterPro" id="IPR036322">
    <property type="entry name" value="WD40_repeat_dom_sf"/>
</dbReference>
<dbReference type="InterPro" id="IPR001680">
    <property type="entry name" value="WD40_rpt"/>
</dbReference>
<dbReference type="PANTHER" id="PTHR19876">
    <property type="entry name" value="COATOMER"/>
    <property type="match status" value="1"/>
</dbReference>
<dbReference type="PANTHER" id="PTHR19876:SF2">
    <property type="entry name" value="COATOMER SUBUNIT BETA"/>
    <property type="match status" value="1"/>
</dbReference>
<dbReference type="Pfam" id="PF04053">
    <property type="entry name" value="B-prop_COPA_B_2nd"/>
    <property type="match status" value="1"/>
</dbReference>
<dbReference type="Pfam" id="PF23953">
    <property type="entry name" value="TPR_COPA_B"/>
    <property type="match status" value="1"/>
</dbReference>
<dbReference type="Pfam" id="PF00400">
    <property type="entry name" value="WD40"/>
    <property type="match status" value="5"/>
</dbReference>
<dbReference type="PIRSF" id="PIRSF005567">
    <property type="entry name" value="Coatomer_beta'_subunit"/>
    <property type="match status" value="1"/>
</dbReference>
<dbReference type="PRINTS" id="PR00320">
    <property type="entry name" value="GPROTEINBRPT"/>
</dbReference>
<dbReference type="SMART" id="SM00320">
    <property type="entry name" value="WD40"/>
    <property type="match status" value="7"/>
</dbReference>
<dbReference type="SUPFAM" id="SSF50978">
    <property type="entry name" value="WD40 repeat-like"/>
    <property type="match status" value="2"/>
</dbReference>
<dbReference type="PROSITE" id="PS00678">
    <property type="entry name" value="WD_REPEATS_1"/>
    <property type="match status" value="1"/>
</dbReference>
<dbReference type="PROSITE" id="PS50082">
    <property type="entry name" value="WD_REPEATS_2"/>
    <property type="match status" value="5"/>
</dbReference>
<dbReference type="PROSITE" id="PS50294">
    <property type="entry name" value="WD_REPEATS_REGION"/>
    <property type="match status" value="1"/>
</dbReference>
<feature type="chain" id="PRO_0000050918" description="Coatomer subunit beta'">
    <location>
        <begin position="1"/>
        <end position="889"/>
    </location>
</feature>
<feature type="repeat" description="WD 1">
    <location>
        <begin position="11"/>
        <end position="41"/>
    </location>
</feature>
<feature type="repeat" description="WD 2">
    <location>
        <begin position="53"/>
        <end position="83"/>
    </location>
</feature>
<feature type="repeat" description="WD 3">
    <location>
        <begin position="95"/>
        <end position="125"/>
    </location>
</feature>
<feature type="repeat" description="WD 4">
    <location>
        <begin position="138"/>
        <end position="169"/>
    </location>
</feature>
<feature type="repeat" description="WD 5">
    <location>
        <begin position="182"/>
        <end position="214"/>
    </location>
</feature>
<feature type="repeat" description="WD 6">
    <location>
        <begin position="226"/>
        <end position="256"/>
    </location>
</feature>
<feature type="region of interest" description="Disordered" evidence="2">
    <location>
        <begin position="806"/>
        <end position="889"/>
    </location>
</feature>
<feature type="compositionally biased region" description="Basic and acidic residues" evidence="2">
    <location>
        <begin position="836"/>
        <end position="864"/>
    </location>
</feature>
<feature type="compositionally biased region" description="Low complexity" evidence="2">
    <location>
        <begin position="866"/>
        <end position="879"/>
    </location>
</feature>
<feature type="modified residue" description="Phosphoserine" evidence="6">
    <location>
        <position position="326"/>
    </location>
</feature>
<feature type="strand" evidence="8">
    <location>
        <begin position="6"/>
        <end position="12"/>
    </location>
</feature>
<feature type="strand" evidence="8">
    <location>
        <begin position="16"/>
        <end position="21"/>
    </location>
</feature>
<feature type="strand" evidence="8">
    <location>
        <begin position="23"/>
        <end position="32"/>
    </location>
</feature>
<feature type="strand" evidence="8">
    <location>
        <begin position="35"/>
        <end position="41"/>
    </location>
</feature>
<feature type="turn" evidence="8">
    <location>
        <begin position="42"/>
        <end position="45"/>
    </location>
</feature>
<feature type="strand" evidence="8">
    <location>
        <begin position="46"/>
        <end position="52"/>
    </location>
</feature>
<feature type="strand" evidence="8">
    <location>
        <begin position="58"/>
        <end position="64"/>
    </location>
</feature>
<feature type="helix" evidence="8">
    <location>
        <begin position="65"/>
        <end position="67"/>
    </location>
</feature>
<feature type="strand" evidence="8">
    <location>
        <begin position="69"/>
        <end position="74"/>
    </location>
</feature>
<feature type="strand" evidence="8">
    <location>
        <begin position="77"/>
        <end position="83"/>
    </location>
</feature>
<feature type="turn" evidence="8">
    <location>
        <begin position="84"/>
        <end position="86"/>
    </location>
</feature>
<feature type="strand" evidence="8">
    <location>
        <begin position="89"/>
        <end position="94"/>
    </location>
</feature>
<feature type="strand" evidence="8">
    <location>
        <begin position="100"/>
        <end position="105"/>
    </location>
</feature>
<feature type="strand" evidence="8">
    <location>
        <begin position="107"/>
        <end position="116"/>
    </location>
</feature>
<feature type="strand" evidence="8">
    <location>
        <begin position="121"/>
        <end position="125"/>
    </location>
</feature>
<feature type="helix" evidence="8">
    <location>
        <begin position="126"/>
        <end position="128"/>
    </location>
</feature>
<feature type="strand" evidence="8">
    <location>
        <begin position="132"/>
        <end position="136"/>
    </location>
</feature>
<feature type="strand" evidence="8">
    <location>
        <begin position="143"/>
        <end position="149"/>
    </location>
</feature>
<feature type="strand" evidence="8">
    <location>
        <begin position="152"/>
        <end position="160"/>
    </location>
</feature>
<feature type="strand" evidence="8">
    <location>
        <begin position="163"/>
        <end position="169"/>
    </location>
</feature>
<feature type="strand" evidence="8">
    <location>
        <begin position="176"/>
        <end position="180"/>
    </location>
</feature>
<feature type="strand" evidence="8">
    <location>
        <begin position="189"/>
        <end position="192"/>
    </location>
</feature>
<feature type="strand" evidence="8">
    <location>
        <begin position="200"/>
        <end position="204"/>
    </location>
</feature>
<feature type="strand" evidence="8">
    <location>
        <begin position="208"/>
        <end position="214"/>
    </location>
</feature>
<feature type="turn" evidence="8">
    <location>
        <begin position="215"/>
        <end position="217"/>
    </location>
</feature>
<feature type="strand" evidence="8">
    <location>
        <begin position="220"/>
        <end position="225"/>
    </location>
</feature>
<feature type="strand" evidence="8">
    <location>
        <begin position="231"/>
        <end position="236"/>
    </location>
</feature>
<feature type="strand" evidence="8">
    <location>
        <begin position="238"/>
        <end position="247"/>
    </location>
</feature>
<feature type="strand" evidence="8">
    <location>
        <begin position="252"/>
        <end position="256"/>
    </location>
</feature>
<feature type="turn" evidence="8">
    <location>
        <begin position="257"/>
        <end position="259"/>
    </location>
</feature>
<feature type="strand" evidence="8">
    <location>
        <begin position="262"/>
        <end position="266"/>
    </location>
</feature>
<feature type="strand" evidence="8">
    <location>
        <begin position="269"/>
        <end position="278"/>
    </location>
</feature>
<feature type="helix" evidence="8">
    <location>
        <begin position="283"/>
        <end position="285"/>
    </location>
</feature>
<feature type="strand" evidence="8">
    <location>
        <begin position="286"/>
        <end position="291"/>
    </location>
</feature>
<feature type="strand" evidence="8">
    <location>
        <begin position="294"/>
        <end position="299"/>
    </location>
</feature>
<feature type="strand" evidence="7">
    <location>
        <begin position="313"/>
        <end position="318"/>
    </location>
</feature>
<feature type="strand" evidence="7">
    <location>
        <begin position="321"/>
        <end position="323"/>
    </location>
</feature>
<feature type="strand" evidence="7">
    <location>
        <begin position="327"/>
        <end position="332"/>
    </location>
</feature>
<feature type="strand" evidence="7">
    <location>
        <begin position="341"/>
        <end position="343"/>
    </location>
</feature>
<feature type="strand" evidence="7">
    <location>
        <begin position="350"/>
        <end position="354"/>
    </location>
</feature>
<feature type="strand" evidence="7">
    <location>
        <begin position="360"/>
        <end position="364"/>
    </location>
</feature>
<feature type="strand" evidence="7">
    <location>
        <begin position="368"/>
        <end position="375"/>
    </location>
</feature>
<feature type="strand" evidence="7">
    <location>
        <begin position="378"/>
        <end position="383"/>
    </location>
</feature>
<feature type="turn" evidence="7">
    <location>
        <begin position="384"/>
        <end position="386"/>
    </location>
</feature>
<feature type="strand" evidence="7">
    <location>
        <begin position="389"/>
        <end position="394"/>
    </location>
</feature>
<feature type="strand" evidence="7">
    <location>
        <begin position="396"/>
        <end position="400"/>
    </location>
</feature>
<feature type="strand" evidence="7">
    <location>
        <begin position="404"/>
        <end position="410"/>
    </location>
</feature>
<feature type="strand" evidence="7">
    <location>
        <begin position="416"/>
        <end position="420"/>
    </location>
</feature>
<feature type="strand" evidence="7">
    <location>
        <begin position="423"/>
        <end position="427"/>
    </location>
</feature>
<feature type="strand" evidence="7">
    <location>
        <begin position="438"/>
        <end position="440"/>
    </location>
</feature>
<feature type="strand" evidence="7">
    <location>
        <begin position="442"/>
        <end position="448"/>
    </location>
</feature>
<feature type="strand" evidence="7">
    <location>
        <begin position="453"/>
        <end position="456"/>
    </location>
</feature>
<feature type="turn" evidence="7">
    <location>
        <begin position="458"/>
        <end position="460"/>
    </location>
</feature>
<feature type="strand" evidence="7">
    <location>
        <begin position="463"/>
        <end position="467"/>
    </location>
</feature>
<feature type="strand" evidence="7">
    <location>
        <begin position="471"/>
        <end position="476"/>
    </location>
</feature>
<feature type="strand" evidence="7">
    <location>
        <begin position="480"/>
        <end position="487"/>
    </location>
</feature>
<feature type="turn" evidence="7">
    <location>
        <begin position="490"/>
        <end position="493"/>
    </location>
</feature>
<feature type="strand" evidence="7">
    <location>
        <begin position="496"/>
        <end position="502"/>
    </location>
</feature>
<feature type="helix" evidence="7">
    <location>
        <begin position="504"/>
        <end position="512"/>
    </location>
</feature>
<feature type="strand" evidence="7">
    <location>
        <begin position="518"/>
        <end position="520"/>
    </location>
</feature>
<feature type="helix" evidence="7">
    <location>
        <begin position="523"/>
        <end position="525"/>
    </location>
</feature>
<feature type="strand" evidence="7">
    <location>
        <begin position="526"/>
        <end position="532"/>
    </location>
</feature>
<feature type="strand" evidence="7">
    <location>
        <begin position="537"/>
        <end position="542"/>
    </location>
</feature>
<feature type="strand" evidence="7">
    <location>
        <begin position="545"/>
        <end position="549"/>
    </location>
</feature>
<feature type="strand" evidence="7">
    <location>
        <begin position="554"/>
        <end position="558"/>
    </location>
</feature>
<feature type="strand" evidence="7">
    <location>
        <begin position="563"/>
        <end position="568"/>
    </location>
</feature>
<feature type="strand" evidence="7">
    <location>
        <begin position="573"/>
        <end position="579"/>
    </location>
</feature>
<feature type="turn" evidence="7">
    <location>
        <begin position="580"/>
        <end position="583"/>
    </location>
</feature>
<feature type="strand" evidence="7">
    <location>
        <begin position="584"/>
        <end position="589"/>
    </location>
</feature>
<feature type="strand" evidence="7">
    <location>
        <begin position="594"/>
        <end position="598"/>
    </location>
</feature>
<name>COPB2_YEAST</name>
<proteinExistence type="evidence at protein level"/>
<protein>
    <recommendedName>
        <fullName>Coatomer subunit beta'</fullName>
    </recommendedName>
    <alternativeName>
        <fullName>Beta'-coat protein</fullName>
        <shortName>Beta'-COP</shortName>
    </alternativeName>
</protein>
<comment type="function">
    <text evidence="4">The coatomer is a cytosolic protein complex that binds to dilysine motifs and reversibly associates with Golgi non-clathrin-coated vesicles, which further mediate biosynthetic protein transport from the ER, via the Golgi up to the trans Golgi network. Coatomer complex is required for budding from Golgi membranes, and is essential for the retrograde Golgi-to-ER transport of dilysine-tagged proteins.</text>
</comment>
<comment type="subunit">
    <text evidence="4">Oligomeric complex that consists of at least the alpha, beta, beta', gamma, delta, epsilon and zeta subunits. Interacts with the ESCRT-0 subunit VPS27.</text>
</comment>
<comment type="interaction">
    <interactant intactId="EBI-4898">
        <id>P41811</id>
    </interactant>
    <interactant intactId="EBI-4860">
        <id>P53622</id>
        <label>COP1</label>
    </interactant>
    <organismsDiffer>false</organismsDiffer>
    <experiments>18</experiments>
</comment>
<comment type="interaction">
    <interactant intactId="EBI-4898">
        <id>P41811</id>
    </interactant>
    <interactant intactId="EBI-8659">
        <id>P02829</id>
        <label>HSP82</label>
    </interactant>
    <organismsDiffer>false</organismsDiffer>
    <experiments>2</experiments>
</comment>
<comment type="interaction">
    <interactant intactId="EBI-4898">
        <id>P41811</id>
    </interactant>
    <interactant intactId="EBI-4905">
        <id>P53600</id>
        <label>RET3</label>
    </interactant>
    <organismsDiffer>false</organismsDiffer>
    <experiments>3</experiments>
</comment>
<comment type="interaction">
    <interactant intactId="EBI-4898">
        <id>P41811</id>
    </interactant>
    <interactant intactId="EBI-4884">
        <id>P40509</id>
        <label>SEC28</label>
    </interactant>
    <organismsDiffer>false</organismsDiffer>
    <experiments>5</experiments>
</comment>
<comment type="subcellular location">
    <subcellularLocation>
        <location evidence="1">Cytoplasm</location>
    </subcellularLocation>
    <subcellularLocation>
        <location evidence="1">Golgi apparatus membrane</location>
        <topology evidence="1">Peripheral membrane protein</topology>
        <orientation evidence="1">Cytoplasmic side</orientation>
    </subcellularLocation>
    <subcellularLocation>
        <location evidence="1">Cytoplasmic vesicle</location>
        <location evidence="1">COPI-coated vesicle membrane</location>
        <topology evidence="1">Peripheral membrane protein</topology>
        <orientation evidence="1">Cytoplasmic side</orientation>
    </subcellularLocation>
    <text evidence="1">The coatomer is cytoplasmic or polymerized on the cytoplasmic side of the Golgi, as well as on the vesicles/buds originating from it.</text>
</comment>
<comment type="miscellaneous">
    <text evidence="3">Present with 129000 molecules/cell in log phase SD medium.</text>
</comment>
<comment type="similarity">
    <text evidence="5">Belongs to the WD repeat COPB2 family.</text>
</comment>
<gene>
    <name type="primary">SEC27</name>
    <name type="ordered locus">YGL137W</name>
    <name type="ORF">G2827</name>
</gene>
<sequence>MKLDIKKTFSNRSDRVKGIDFHPTEPWVLTTLYSGRVELWNYETQVEVRSIQVTETPVRAGKFIARKNWIIVGSDDFRIRVFNYNTGEKVVDFEAHPDYIRSIAVHPTKPYVLSGSDDLTVKLWNWENNWALEQTFEGHEHFVMCVAFNPKDPSTFASGCLDRTVKVWSLGQSTPNFTLTTGQERGVNYVDYYPLPDKPYMITASDDLTIKIWDYQTKSCVATLEGHMSNVSFAVFHPTLPIIISGSEDGTLKIWNSSTYKVEKTLNVGLERSWCIATHPTGRKNYIASGFDNGFTVLSLGNDEPTLSLDPVGKLVWSGGKNAAASDIFTAVIRGNEEVEQDEPLSLQTKELGSVDVFPQSLAHSPNGRFVTVVGDGEYVIYTALAWRNKAFGKCQDFVWGPDSNSYALIDETGQIKYYKNFKEVTSWSVPMHSAIDRLFSGALLGVKSDGFVYFFDWDNGTLVRRIDVNAKDVIWSDNGELVMIVNTNSNGDEASGYTLLFNKDAYLEAANNGNIDDSEGVDEAFDVLYELSESITSGKWVGDVFIFTTATNRLNYFVGGKTYNLAHYTKEMYLLGYLARDNKVYLADREVHVYGYEISLEVLEFQTLTLRGEIEEAIENVLPNVEGKDSLTKIARFLEGQEYYEEALNISPDQDQKFELALKVGQLTLARDLLTDESAEMKWRALGDASLQRFNFKLAVEAFTNAHDLESLFLLHSSFNNKEGLVTLAKDAERAGKFNLAFNAYWIAGDIQGAKDLLIKSQRFSEAAFLGSTYGLGDDAVNDIVTKWKENLILNGKNTVSERVCGAEGLPGSSSSGDAQPLIDLDSTPAPEQADENKEAEVEDSEFKESNSEAVEAEKKEEEAPQQQQSEQQPEQGEAVPEPVEEES</sequence>
<organism>
    <name type="scientific">Saccharomyces cerevisiae (strain ATCC 204508 / S288c)</name>
    <name type="common">Baker's yeast</name>
    <dbReference type="NCBI Taxonomy" id="559292"/>
    <lineage>
        <taxon>Eukaryota</taxon>
        <taxon>Fungi</taxon>
        <taxon>Dikarya</taxon>
        <taxon>Ascomycota</taxon>
        <taxon>Saccharomycotina</taxon>
        <taxon>Saccharomycetes</taxon>
        <taxon>Saccharomycetales</taxon>
        <taxon>Saccharomycetaceae</taxon>
        <taxon>Saccharomyces</taxon>
    </lineage>
</organism>